<keyword id="KW-0032">Aminotransferase</keyword>
<keyword id="KW-0663">Pyridoxal phosphate</keyword>
<keyword id="KW-1185">Reference proteome</keyword>
<keyword id="KW-0808">Transferase</keyword>
<comment type="function">
    <text evidence="1">Acts on the D-isomers of alanine, leucine, aspartate, glutamate, aminobutyrate, norvaline and asparagine. The enzyme transfers an amino group from a substrate D-amino acid to the pyridoxal phosphate cofactor to form pyridoxamine and an alpha-keto acid in the first half-reaction. The second half-reaction is the reverse of the first, transferring the amino group from the pyridoxamine to a second alpha-keto acid to form the product D-amino acid via a ping-pong mechanism. This is an important process in the formation of D-alanine and D-glutamate, which are essential bacterial cell wall components (By similarity).</text>
</comment>
<comment type="catalytic activity">
    <reaction>
        <text>D-alanine + 2-oxoglutarate = D-glutamate + pyruvate</text>
        <dbReference type="Rhea" id="RHEA:15869"/>
        <dbReference type="ChEBI" id="CHEBI:15361"/>
        <dbReference type="ChEBI" id="CHEBI:16810"/>
        <dbReference type="ChEBI" id="CHEBI:29986"/>
        <dbReference type="ChEBI" id="CHEBI:57416"/>
        <dbReference type="EC" id="2.6.1.21"/>
    </reaction>
</comment>
<comment type="cofactor">
    <cofactor evidence="1">
        <name>pyridoxal 5'-phosphate</name>
        <dbReference type="ChEBI" id="CHEBI:597326"/>
    </cofactor>
</comment>
<comment type="subunit">
    <text evidence="1">Homodimer.</text>
</comment>
<comment type="similarity">
    <text evidence="3">Belongs to the class-IV pyridoxal-phosphate-dependent aminotransferase family.</text>
</comment>
<dbReference type="EC" id="2.6.1.21"/>
<dbReference type="EMBL" id="CP000029">
    <property type="protein sequence ID" value="AAW54637.1"/>
    <property type="molecule type" value="Genomic_DNA"/>
</dbReference>
<dbReference type="RefSeq" id="WP_002484981.1">
    <property type="nucleotide sequence ID" value="NC_002976.3"/>
</dbReference>
<dbReference type="SMR" id="Q5HNG0"/>
<dbReference type="STRING" id="176279.SERP1309"/>
<dbReference type="KEGG" id="ser:SERP1309"/>
<dbReference type="eggNOG" id="COG0115">
    <property type="taxonomic scope" value="Bacteria"/>
</dbReference>
<dbReference type="HOGENOM" id="CLU_020844_4_1_9"/>
<dbReference type="Proteomes" id="UP000000531">
    <property type="component" value="Chromosome"/>
</dbReference>
<dbReference type="GO" id="GO:0005829">
    <property type="term" value="C:cytosol"/>
    <property type="evidence" value="ECO:0007669"/>
    <property type="project" value="TreeGrafter"/>
</dbReference>
<dbReference type="GO" id="GO:0047810">
    <property type="term" value="F:D-alanine-2-oxoglutarate aminotransferase activity"/>
    <property type="evidence" value="ECO:0007669"/>
    <property type="project" value="UniProtKB-EC"/>
</dbReference>
<dbReference type="GO" id="GO:0030170">
    <property type="term" value="F:pyridoxal phosphate binding"/>
    <property type="evidence" value="ECO:0007669"/>
    <property type="project" value="InterPro"/>
</dbReference>
<dbReference type="GO" id="GO:0046394">
    <property type="term" value="P:carboxylic acid biosynthetic process"/>
    <property type="evidence" value="ECO:0007669"/>
    <property type="project" value="UniProtKB-ARBA"/>
</dbReference>
<dbReference type="GO" id="GO:0046416">
    <property type="term" value="P:D-amino acid metabolic process"/>
    <property type="evidence" value="ECO:0007669"/>
    <property type="project" value="InterPro"/>
</dbReference>
<dbReference type="CDD" id="cd01558">
    <property type="entry name" value="D-AAT_like"/>
    <property type="match status" value="1"/>
</dbReference>
<dbReference type="FunFam" id="3.20.10.10:FF:000002">
    <property type="entry name" value="D-alanine aminotransferase"/>
    <property type="match status" value="1"/>
</dbReference>
<dbReference type="FunFam" id="3.30.470.10:FF:000009">
    <property type="entry name" value="D-alanine aminotransferase"/>
    <property type="match status" value="1"/>
</dbReference>
<dbReference type="Gene3D" id="3.30.470.10">
    <property type="match status" value="1"/>
</dbReference>
<dbReference type="Gene3D" id="3.20.10.10">
    <property type="entry name" value="D-amino Acid Aminotransferase, subunit A, domain 2"/>
    <property type="match status" value="1"/>
</dbReference>
<dbReference type="InterPro" id="IPR001544">
    <property type="entry name" value="Aminotrans_IV"/>
</dbReference>
<dbReference type="InterPro" id="IPR018300">
    <property type="entry name" value="Aminotrans_IV_CS"/>
</dbReference>
<dbReference type="InterPro" id="IPR036038">
    <property type="entry name" value="Aminotransferase-like"/>
</dbReference>
<dbReference type="InterPro" id="IPR043132">
    <property type="entry name" value="BCAT-like_C"/>
</dbReference>
<dbReference type="InterPro" id="IPR043131">
    <property type="entry name" value="BCAT-like_N"/>
</dbReference>
<dbReference type="InterPro" id="IPR050571">
    <property type="entry name" value="Class-IV_PLP-Dep_Aminotrnsfr"/>
</dbReference>
<dbReference type="InterPro" id="IPR005784">
    <property type="entry name" value="D_amino_transT"/>
</dbReference>
<dbReference type="NCBIfam" id="TIGR01121">
    <property type="entry name" value="D_amino_aminoT"/>
    <property type="match status" value="1"/>
</dbReference>
<dbReference type="PANTHER" id="PTHR42743">
    <property type="entry name" value="AMINO-ACID AMINOTRANSFERASE"/>
    <property type="match status" value="1"/>
</dbReference>
<dbReference type="PANTHER" id="PTHR42743:SF10">
    <property type="entry name" value="D-ALANINE AMINOTRANSFERASE"/>
    <property type="match status" value="1"/>
</dbReference>
<dbReference type="Pfam" id="PF01063">
    <property type="entry name" value="Aminotran_4"/>
    <property type="match status" value="1"/>
</dbReference>
<dbReference type="SUPFAM" id="SSF56752">
    <property type="entry name" value="D-aminoacid aminotransferase-like PLP-dependent enzymes"/>
    <property type="match status" value="1"/>
</dbReference>
<dbReference type="PROSITE" id="PS00770">
    <property type="entry name" value="AA_TRANSFER_CLASS_4"/>
    <property type="match status" value="1"/>
</dbReference>
<feature type="chain" id="PRO_0000103260" description="D-alanine aminotransferase">
    <location>
        <begin position="1"/>
        <end position="282"/>
    </location>
</feature>
<feature type="active site" description="Proton acceptor" evidence="2">
    <location>
        <position position="146"/>
    </location>
</feature>
<feature type="binding site" evidence="2">
    <location>
        <position position="32"/>
    </location>
    <ligand>
        <name>substrate</name>
    </ligand>
</feature>
<feature type="binding site" evidence="2">
    <location>
        <position position="51"/>
    </location>
    <ligand>
        <name>pyridoxal 5'-phosphate</name>
        <dbReference type="ChEBI" id="CHEBI:597326"/>
    </ligand>
</feature>
<feature type="binding site" evidence="2">
    <location>
        <position position="99"/>
    </location>
    <ligand>
        <name>substrate</name>
    </ligand>
</feature>
<feature type="binding site" evidence="2">
    <location>
        <position position="101"/>
    </location>
    <ligand>
        <name>substrate</name>
    </ligand>
</feature>
<feature type="binding site" evidence="2">
    <location>
        <position position="178"/>
    </location>
    <ligand>
        <name>pyridoxal 5'-phosphate</name>
        <dbReference type="ChEBI" id="CHEBI:597326"/>
    </ligand>
</feature>
<feature type="modified residue" description="N6-(pyridoxal phosphate)lysine" evidence="2">
    <location>
        <position position="146"/>
    </location>
</feature>
<sequence length="282" mass="32163">MTKVFINGEFVNEEDAKVSYEDRGYVFGDGIYEYIRAYDGKLFTVKEHFERFLRSAEEIGLDLNYTIEELIELVRRLLKENNVVNGGIYIQATRGAAPRNHSFPTPPVKPVIMAFTKSYDRPYEELEQGVYAITTEDIRWLRCDIKSLNLLGNVLAKEYAVKYNAAEAIQHRGDIVTEGASSNVYAIKDGVIYTHPVNNFILNGITRRVIKWIAEDEQIPFKEEKFTVEFLKSADEVIISSTSAEVMPITKIDGENVQDGQVGTITRQLQQGFEKYIQSHSI</sequence>
<organism>
    <name type="scientific">Staphylococcus epidermidis (strain ATCC 35984 / DSM 28319 / BCRC 17069 / CCUG 31568 / BM 3577 / RP62A)</name>
    <dbReference type="NCBI Taxonomy" id="176279"/>
    <lineage>
        <taxon>Bacteria</taxon>
        <taxon>Bacillati</taxon>
        <taxon>Bacillota</taxon>
        <taxon>Bacilli</taxon>
        <taxon>Bacillales</taxon>
        <taxon>Staphylococcaceae</taxon>
        <taxon>Staphylococcus</taxon>
    </lineage>
</organism>
<accession>Q5HNG0</accession>
<evidence type="ECO:0000250" key="1"/>
<evidence type="ECO:0000250" key="2">
    <source>
        <dbReference type="UniProtKB" id="P19938"/>
    </source>
</evidence>
<evidence type="ECO:0000305" key="3"/>
<protein>
    <recommendedName>
        <fullName>D-alanine aminotransferase</fullName>
        <ecNumber>2.6.1.21</ecNumber>
    </recommendedName>
    <alternativeName>
        <fullName>D-amino acid aminotransferase</fullName>
    </alternativeName>
    <alternativeName>
        <fullName>D-amino acid transaminase</fullName>
        <shortName>DAAT</shortName>
    </alternativeName>
    <alternativeName>
        <fullName>D-aspartate aminotransferase</fullName>
    </alternativeName>
</protein>
<gene>
    <name type="primary">dat</name>
    <name type="ordered locus">SERP1309</name>
</gene>
<proteinExistence type="inferred from homology"/>
<name>DAAA_STAEQ</name>
<reference key="1">
    <citation type="journal article" date="2005" name="J. Bacteriol.">
        <title>Insights on evolution of virulence and resistance from the complete genome analysis of an early methicillin-resistant Staphylococcus aureus strain and a biofilm-producing methicillin-resistant Staphylococcus epidermidis strain.</title>
        <authorList>
            <person name="Gill S.R."/>
            <person name="Fouts D.E."/>
            <person name="Archer G.L."/>
            <person name="Mongodin E.F."/>
            <person name="DeBoy R.T."/>
            <person name="Ravel J."/>
            <person name="Paulsen I.T."/>
            <person name="Kolonay J.F."/>
            <person name="Brinkac L.M."/>
            <person name="Beanan M.J."/>
            <person name="Dodson R.J."/>
            <person name="Daugherty S.C."/>
            <person name="Madupu R."/>
            <person name="Angiuoli S.V."/>
            <person name="Durkin A.S."/>
            <person name="Haft D.H."/>
            <person name="Vamathevan J.J."/>
            <person name="Khouri H."/>
            <person name="Utterback T.R."/>
            <person name="Lee C."/>
            <person name="Dimitrov G."/>
            <person name="Jiang L."/>
            <person name="Qin H."/>
            <person name="Weidman J."/>
            <person name="Tran K."/>
            <person name="Kang K.H."/>
            <person name="Hance I.R."/>
            <person name="Nelson K.E."/>
            <person name="Fraser C.M."/>
        </authorList>
    </citation>
    <scope>NUCLEOTIDE SEQUENCE [LARGE SCALE GENOMIC DNA]</scope>
    <source>
        <strain>ATCC 35984 / DSM 28319 / BCRC 17069 / CCUG 31568 / BM 3577 / RP62A</strain>
    </source>
</reference>